<dbReference type="EMBL" id="BC042225">
    <property type="protein sequence ID" value="AAH42225.1"/>
    <property type="molecule type" value="mRNA"/>
</dbReference>
<dbReference type="SMR" id="Q8AVK2"/>
<dbReference type="AGR" id="Xenbase:XB-GENE-1218973"/>
<dbReference type="Xenbase" id="XB-GENE-1218973">
    <property type="gene designation" value="lin28b.S"/>
</dbReference>
<dbReference type="Proteomes" id="UP000186698">
    <property type="component" value="Unplaced"/>
</dbReference>
<dbReference type="GO" id="GO:0005737">
    <property type="term" value="C:cytoplasm"/>
    <property type="evidence" value="ECO:0000318"/>
    <property type="project" value="GO_Central"/>
</dbReference>
<dbReference type="GO" id="GO:0005730">
    <property type="term" value="C:nucleolus"/>
    <property type="evidence" value="ECO:0007669"/>
    <property type="project" value="UniProtKB-SubCell"/>
</dbReference>
<dbReference type="GO" id="GO:0005634">
    <property type="term" value="C:nucleus"/>
    <property type="evidence" value="ECO:0000318"/>
    <property type="project" value="GO_Central"/>
</dbReference>
<dbReference type="GO" id="GO:0003729">
    <property type="term" value="F:mRNA binding"/>
    <property type="evidence" value="ECO:0000318"/>
    <property type="project" value="GO_Central"/>
</dbReference>
<dbReference type="GO" id="GO:0003723">
    <property type="term" value="F:RNA binding"/>
    <property type="evidence" value="ECO:0000250"/>
    <property type="project" value="UniProtKB"/>
</dbReference>
<dbReference type="GO" id="GO:0008270">
    <property type="term" value="F:zinc ion binding"/>
    <property type="evidence" value="ECO:0007669"/>
    <property type="project" value="UniProtKB-KW"/>
</dbReference>
<dbReference type="GO" id="GO:0010587">
    <property type="term" value="P:miRNA catabolic process"/>
    <property type="evidence" value="ECO:0000250"/>
    <property type="project" value="UniProtKB"/>
</dbReference>
<dbReference type="GO" id="GO:0031054">
    <property type="term" value="P:pre-miRNA processing"/>
    <property type="evidence" value="ECO:0000250"/>
    <property type="project" value="UniProtKB"/>
</dbReference>
<dbReference type="GO" id="GO:0031123">
    <property type="term" value="P:RNA 3'-end processing"/>
    <property type="evidence" value="ECO:0000250"/>
    <property type="project" value="UniProtKB"/>
</dbReference>
<dbReference type="CDD" id="cd04458">
    <property type="entry name" value="CSP_CDS"/>
    <property type="match status" value="1"/>
</dbReference>
<dbReference type="FunFam" id="4.10.60.10:FF:000007">
    <property type="entry name" value="Protein lin-28 homolog A"/>
    <property type="match status" value="1"/>
</dbReference>
<dbReference type="FunFam" id="2.40.50.140:FF:000087">
    <property type="entry name" value="Protein lin-28 homolog B"/>
    <property type="match status" value="1"/>
</dbReference>
<dbReference type="Gene3D" id="2.40.50.140">
    <property type="entry name" value="Nucleic acid-binding proteins"/>
    <property type="match status" value="1"/>
</dbReference>
<dbReference type="Gene3D" id="4.10.60.10">
    <property type="entry name" value="Zinc finger, CCHC-type"/>
    <property type="match status" value="1"/>
</dbReference>
<dbReference type="InterPro" id="IPR011129">
    <property type="entry name" value="CSD"/>
</dbReference>
<dbReference type="InterPro" id="IPR002059">
    <property type="entry name" value="CSP_DNA-bd"/>
</dbReference>
<dbReference type="InterPro" id="IPR051373">
    <property type="entry name" value="Lin-28_RNA-binding"/>
</dbReference>
<dbReference type="InterPro" id="IPR054081">
    <property type="entry name" value="Lin-28A-like_Znf-CCHC_2"/>
</dbReference>
<dbReference type="InterPro" id="IPR012340">
    <property type="entry name" value="NA-bd_OB-fold"/>
</dbReference>
<dbReference type="InterPro" id="IPR001878">
    <property type="entry name" value="Znf_CCHC"/>
</dbReference>
<dbReference type="InterPro" id="IPR036875">
    <property type="entry name" value="Znf_CCHC_sf"/>
</dbReference>
<dbReference type="PANTHER" id="PTHR46109">
    <property type="entry name" value="PROTEIN LIN-28"/>
    <property type="match status" value="1"/>
</dbReference>
<dbReference type="PANTHER" id="PTHR46109:SF3">
    <property type="entry name" value="PROTEIN LIN-28 HOMOLOG B"/>
    <property type="match status" value="1"/>
</dbReference>
<dbReference type="Pfam" id="PF00313">
    <property type="entry name" value="CSD"/>
    <property type="match status" value="1"/>
</dbReference>
<dbReference type="Pfam" id="PF21890">
    <property type="entry name" value="Lin-28A-like_zf-CCHC_2"/>
    <property type="match status" value="1"/>
</dbReference>
<dbReference type="Pfam" id="PF00098">
    <property type="entry name" value="zf-CCHC"/>
    <property type="match status" value="1"/>
</dbReference>
<dbReference type="PRINTS" id="PR00050">
    <property type="entry name" value="COLDSHOCK"/>
</dbReference>
<dbReference type="SMART" id="SM00357">
    <property type="entry name" value="CSP"/>
    <property type="match status" value="1"/>
</dbReference>
<dbReference type="SMART" id="SM00343">
    <property type="entry name" value="ZnF_C2HC"/>
    <property type="match status" value="2"/>
</dbReference>
<dbReference type="SUPFAM" id="SSF50249">
    <property type="entry name" value="Nucleic acid-binding proteins"/>
    <property type="match status" value="1"/>
</dbReference>
<dbReference type="SUPFAM" id="SSF57756">
    <property type="entry name" value="Retrovirus zinc finger-like domains"/>
    <property type="match status" value="1"/>
</dbReference>
<dbReference type="PROSITE" id="PS51857">
    <property type="entry name" value="CSD_2"/>
    <property type="match status" value="1"/>
</dbReference>
<dbReference type="PROSITE" id="PS50158">
    <property type="entry name" value="ZF_CCHC"/>
    <property type="match status" value="1"/>
</dbReference>
<keyword id="KW-0479">Metal-binding</keyword>
<keyword id="KW-0539">Nucleus</keyword>
<keyword id="KW-1185">Reference proteome</keyword>
<keyword id="KW-0677">Repeat</keyword>
<keyword id="KW-0694">RNA-binding</keyword>
<keyword id="KW-0943">RNA-mediated gene silencing</keyword>
<keyword id="KW-0862">Zinc</keyword>
<keyword id="KW-0863">Zinc-finger</keyword>
<gene>
    <name type="primary">lin28b</name>
</gene>
<organism>
    <name type="scientific">Xenopus laevis</name>
    <name type="common">African clawed frog</name>
    <dbReference type="NCBI Taxonomy" id="8355"/>
    <lineage>
        <taxon>Eukaryota</taxon>
        <taxon>Metazoa</taxon>
        <taxon>Chordata</taxon>
        <taxon>Craniata</taxon>
        <taxon>Vertebrata</taxon>
        <taxon>Euteleostomi</taxon>
        <taxon>Amphibia</taxon>
        <taxon>Batrachia</taxon>
        <taxon>Anura</taxon>
        <taxon>Pipoidea</taxon>
        <taxon>Pipidae</taxon>
        <taxon>Xenopodinae</taxon>
        <taxon>Xenopus</taxon>
        <taxon>Xenopus</taxon>
    </lineage>
</organism>
<name>LN28B_XENLA</name>
<sequence length="252" mass="27983">MAEGGAARGTREEQGKLPEQEEEEEEDPQVLLGSGHCKWFNVRMGFGFISMTSREGSPLENPVDVFVHQSKLYMDGFRSLKEGEPVEFTFKKSSKGFESLRVTGPGGNPCLGSERRPKAKTVQKRKPKGDRCYNCGGLDHHAKECNLPPQPKKCHYCQSTMHMVANCPHKIVPQHPTTSQGRYEAEPQPSTSSFQREGGGAFDYSSPSYSQEGRSELSERSSRSPQEASLSKISTSPEEQSRKGPSVQKKKK</sequence>
<evidence type="ECO:0000250" key="1"/>
<evidence type="ECO:0000250" key="2">
    <source>
        <dbReference type="UniProtKB" id="Q6ZN17"/>
    </source>
</evidence>
<evidence type="ECO:0000255" key="3">
    <source>
        <dbReference type="PROSITE-ProRule" id="PRU00047"/>
    </source>
</evidence>
<evidence type="ECO:0000256" key="4">
    <source>
        <dbReference type="SAM" id="MobiDB-lite"/>
    </source>
</evidence>
<evidence type="ECO:0000305" key="5"/>
<reference key="1">
    <citation type="submission" date="2003-01" db="EMBL/GenBank/DDBJ databases">
        <authorList>
            <consortium name="NIH - Xenopus Gene Collection (XGC) project"/>
        </authorList>
    </citation>
    <scope>NUCLEOTIDE SEQUENCE [LARGE SCALE MRNA]</scope>
    <source>
        <tissue>Embryo</tissue>
    </source>
</reference>
<protein>
    <recommendedName>
        <fullName>Protein lin-28 homolog B</fullName>
        <shortName>Lin-28B</shortName>
    </recommendedName>
</protein>
<comment type="function">
    <text evidence="2">Suppressor of specific microRNA (miRNA) biogenesis. Binds target primary miRNA transcripts and sequester them in the nucleolus, away from the microprocessor complex, hence preventing their processing into mature miRNA. The specific interaction with target pri-miRNAs occurs via an 5'-GGAG-3' motif in the pre-miRNA terminal loop.</text>
</comment>
<comment type="subcellular location">
    <subcellularLocation>
        <location evidence="2">Nucleus</location>
        <location evidence="2">Nucleolus</location>
    </subcellularLocation>
</comment>
<comment type="similarity">
    <text evidence="5">Belongs to the lin-28 family.</text>
</comment>
<accession>Q8AVK2</accession>
<proteinExistence type="evidence at transcript level"/>
<feature type="chain" id="PRO_0000253796" description="Protein lin-28 homolog B">
    <location>
        <begin position="1"/>
        <end position="252" status="greater than"/>
    </location>
</feature>
<feature type="domain" description="CSD">
    <location>
        <begin position="32"/>
        <end position="105"/>
    </location>
</feature>
<feature type="zinc finger region" description="CCHC-type 1" evidence="3">
    <location>
        <begin position="130"/>
        <end position="147"/>
    </location>
</feature>
<feature type="zinc finger region" description="CCHC-type 2" evidence="3">
    <location>
        <begin position="152"/>
        <end position="169"/>
    </location>
</feature>
<feature type="region of interest" description="Disordered" evidence="4">
    <location>
        <begin position="1"/>
        <end position="30"/>
    </location>
</feature>
<feature type="region of interest" description="Disordered" evidence="4">
    <location>
        <begin position="172"/>
        <end position="252"/>
    </location>
</feature>
<feature type="compositionally biased region" description="Basic and acidic residues" evidence="4">
    <location>
        <begin position="9"/>
        <end position="19"/>
    </location>
</feature>
<feature type="compositionally biased region" description="Basic and acidic residues" evidence="4">
    <location>
        <begin position="213"/>
        <end position="222"/>
    </location>
</feature>
<feature type="compositionally biased region" description="Polar residues" evidence="4">
    <location>
        <begin position="225"/>
        <end position="238"/>
    </location>
</feature>
<feature type="binding site" evidence="1">
    <location>
        <position position="132"/>
    </location>
    <ligand>
        <name>Zn(2+)</name>
        <dbReference type="ChEBI" id="CHEBI:29105"/>
        <label>1</label>
    </ligand>
</feature>
<feature type="binding site" evidence="1">
    <location>
        <position position="135"/>
    </location>
    <ligand>
        <name>Zn(2+)</name>
        <dbReference type="ChEBI" id="CHEBI:29105"/>
        <label>1</label>
    </ligand>
</feature>
<feature type="binding site" evidence="1">
    <location>
        <position position="140"/>
    </location>
    <ligand>
        <name>Zn(2+)</name>
        <dbReference type="ChEBI" id="CHEBI:29105"/>
        <label>1</label>
    </ligand>
</feature>
<feature type="binding site" evidence="1">
    <location>
        <position position="145"/>
    </location>
    <ligand>
        <name>Zn(2+)</name>
        <dbReference type="ChEBI" id="CHEBI:29105"/>
        <label>1</label>
    </ligand>
</feature>
<feature type="binding site" evidence="1">
    <location>
        <position position="154"/>
    </location>
    <ligand>
        <name>Zn(2+)</name>
        <dbReference type="ChEBI" id="CHEBI:29105"/>
        <label>2</label>
    </ligand>
</feature>
<feature type="binding site" evidence="1">
    <location>
        <position position="157"/>
    </location>
    <ligand>
        <name>Zn(2+)</name>
        <dbReference type="ChEBI" id="CHEBI:29105"/>
        <label>2</label>
    </ligand>
</feature>
<feature type="binding site" evidence="1">
    <location>
        <position position="162"/>
    </location>
    <ligand>
        <name>Zn(2+)</name>
        <dbReference type="ChEBI" id="CHEBI:29105"/>
        <label>2</label>
    </ligand>
</feature>
<feature type="binding site" evidence="1">
    <location>
        <position position="167"/>
    </location>
    <ligand>
        <name>Zn(2+)</name>
        <dbReference type="ChEBI" id="CHEBI:29105"/>
        <label>2</label>
    </ligand>
</feature>
<feature type="non-terminal residue">
    <location>
        <position position="252"/>
    </location>
</feature>